<gene>
    <name evidence="2" type="primary">mkrn1</name>
</gene>
<dbReference type="EC" id="2.3.2.27"/>
<dbReference type="EMBL" id="AB073984">
    <property type="protein sequence ID" value="BAB91214.2"/>
    <property type="molecule type" value="mRNA"/>
</dbReference>
<dbReference type="EMBL" id="AB073985">
    <property type="protein sequence ID" value="BAB91215.2"/>
    <property type="molecule type" value="Genomic_DNA"/>
</dbReference>
<dbReference type="EMBL" id="AB083365">
    <property type="protein sequence ID" value="BAC98837.1"/>
    <property type="molecule type" value="mRNA"/>
</dbReference>
<dbReference type="EMBL" id="AB083692">
    <property type="protein sequence ID" value="BAC99018.1"/>
    <property type="status" value="ALT_FRAME"/>
    <property type="molecule type" value="Genomic_DNA"/>
</dbReference>
<dbReference type="UniPathway" id="UPA00143"/>
<dbReference type="GO" id="GO:0061630">
    <property type="term" value="F:ubiquitin protein ligase activity"/>
    <property type="evidence" value="ECO:0007669"/>
    <property type="project" value="InterPro"/>
</dbReference>
<dbReference type="GO" id="GO:0008270">
    <property type="term" value="F:zinc ion binding"/>
    <property type="evidence" value="ECO:0007669"/>
    <property type="project" value="UniProtKB-KW"/>
</dbReference>
<dbReference type="GO" id="GO:0000209">
    <property type="term" value="P:protein polyubiquitination"/>
    <property type="evidence" value="ECO:0007669"/>
    <property type="project" value="InterPro"/>
</dbReference>
<dbReference type="CDD" id="cd16730">
    <property type="entry name" value="RING-HC_MKRN1_3"/>
    <property type="match status" value="1"/>
</dbReference>
<dbReference type="FunFam" id="3.30.40.10:FF:000117">
    <property type="entry name" value="Probable E3 ubiquitin-protein ligase makorin-1"/>
    <property type="match status" value="1"/>
</dbReference>
<dbReference type="Gene3D" id="3.30.1370.210">
    <property type="match status" value="1"/>
</dbReference>
<dbReference type="Gene3D" id="1.20.120.1350">
    <property type="entry name" value="Pneumovirus matrix protein 2 (M2), zinc-binding domain"/>
    <property type="match status" value="1"/>
</dbReference>
<dbReference type="Gene3D" id="3.30.40.10">
    <property type="entry name" value="Zinc/RING finger domain, C3HC4 (zinc finger)"/>
    <property type="match status" value="1"/>
</dbReference>
<dbReference type="InterPro" id="IPR045072">
    <property type="entry name" value="MKRN-like"/>
</dbReference>
<dbReference type="InterPro" id="IPR031644">
    <property type="entry name" value="MKRN1_C"/>
</dbReference>
<dbReference type="InterPro" id="IPR041367">
    <property type="entry name" value="Znf-CCCH_4"/>
</dbReference>
<dbReference type="InterPro" id="IPR000571">
    <property type="entry name" value="Znf_CCCH"/>
</dbReference>
<dbReference type="InterPro" id="IPR036855">
    <property type="entry name" value="Znf_CCCH_sf"/>
</dbReference>
<dbReference type="InterPro" id="IPR001841">
    <property type="entry name" value="Znf_RING"/>
</dbReference>
<dbReference type="InterPro" id="IPR013083">
    <property type="entry name" value="Znf_RING/FYVE/PHD"/>
</dbReference>
<dbReference type="InterPro" id="IPR017907">
    <property type="entry name" value="Znf_RING_CS"/>
</dbReference>
<dbReference type="PANTHER" id="PTHR11224:SF37">
    <property type="entry name" value="E3 UBIQUITIN-PROTEIN LIGASE MAKORIN-1"/>
    <property type="match status" value="1"/>
</dbReference>
<dbReference type="PANTHER" id="PTHR11224">
    <property type="entry name" value="MAKORIN-RELATED"/>
    <property type="match status" value="1"/>
</dbReference>
<dbReference type="Pfam" id="PF15815">
    <property type="entry name" value="MKRN1_C"/>
    <property type="match status" value="1"/>
</dbReference>
<dbReference type="Pfam" id="PF14608">
    <property type="entry name" value="zf-CCCH_2"/>
    <property type="match status" value="1"/>
</dbReference>
<dbReference type="Pfam" id="PF18044">
    <property type="entry name" value="zf-CCCH_4"/>
    <property type="match status" value="3"/>
</dbReference>
<dbReference type="SMART" id="SM00184">
    <property type="entry name" value="RING"/>
    <property type="match status" value="1"/>
</dbReference>
<dbReference type="SMART" id="SM00356">
    <property type="entry name" value="ZnF_C3H1"/>
    <property type="match status" value="4"/>
</dbReference>
<dbReference type="SUPFAM" id="SSF90229">
    <property type="entry name" value="CCCH zinc finger"/>
    <property type="match status" value="2"/>
</dbReference>
<dbReference type="SUPFAM" id="SSF57850">
    <property type="entry name" value="RING/U-box"/>
    <property type="match status" value="1"/>
</dbReference>
<dbReference type="PROSITE" id="PS50103">
    <property type="entry name" value="ZF_C3H1"/>
    <property type="match status" value="4"/>
</dbReference>
<dbReference type="PROSITE" id="PS00518">
    <property type="entry name" value="ZF_RING_1"/>
    <property type="match status" value="1"/>
</dbReference>
<dbReference type="PROSITE" id="PS50089">
    <property type="entry name" value="ZF_RING_2"/>
    <property type="match status" value="1"/>
</dbReference>
<sequence>MAEAAAASTAASGVIGGWTKHVTCRYFMHGLCKEGDNCRYSHDLTNSKPAAMICKFFQKGNCVFGDRCRFEHCKPAKNEELPAPQMLPLPSASLAGPSDPEPSGPTPVPGAQDWVNAAEFVPGQPYCGRAEQAKVESSVPLIEEFDSYPAPDNKQLRKQLCPYAAVGECRYGINCAYLHGDVCYMCGLQVLHPTDNNQRSEHTKACIEAHEKDMEISFAIQRSKDMMCGVCMEVVFEKANPSERRFGILSNCSHCYCLKCIRKWRSAKQFESKIIKSCPECRITSNFVIPSEYWVEDKDDKQKLIQKYKDGMGSKPCRYFDEGRGTCPFGSNCFYKHAFPDGRLEEAQPQRRQTGSNSRNRNSRRTPLWDIYDERESTDSFDNEDEEMVTFELSEMLLMLLAAGTDDEEVIIRPPSCATSSGRLDPTVTRYRKAC</sequence>
<keyword id="KW-0479">Metal-binding</keyword>
<keyword id="KW-0677">Repeat</keyword>
<keyword id="KW-0808">Transferase</keyword>
<keyword id="KW-0833">Ubl conjugation pathway</keyword>
<keyword id="KW-0862">Zinc</keyword>
<keyword id="KW-0863">Zinc-finger</keyword>
<proteinExistence type="evidence at transcript level"/>
<evidence type="ECO:0000250" key="1"/>
<evidence type="ECO:0000250" key="2">
    <source>
        <dbReference type="UniProtKB" id="Q9UHC7"/>
    </source>
</evidence>
<evidence type="ECO:0000255" key="3"/>
<evidence type="ECO:0000255" key="4">
    <source>
        <dbReference type="PROSITE-ProRule" id="PRU00175"/>
    </source>
</evidence>
<evidence type="ECO:0000255" key="5">
    <source>
        <dbReference type="PROSITE-ProRule" id="PRU00723"/>
    </source>
</evidence>
<evidence type="ECO:0000256" key="6">
    <source>
        <dbReference type="SAM" id="MobiDB-lite"/>
    </source>
</evidence>
<evidence type="ECO:0000269" key="7">
    <source ref="1"/>
</evidence>
<evidence type="ECO:0000305" key="8"/>
<evidence type="ECO:0000312" key="9">
    <source>
        <dbReference type="EMBL" id="BAB91214.2"/>
    </source>
</evidence>
<evidence type="ECO:0000312" key="10">
    <source>
        <dbReference type="EMBL" id="BAC99018.1"/>
    </source>
</evidence>
<comment type="function">
    <text evidence="1">E3 ubiquitin ligase catalyzing the covalent attachment of ubiquitin moieties onto substrate proteins.</text>
</comment>
<comment type="catalytic activity">
    <reaction>
        <text>S-ubiquitinyl-[E2 ubiquitin-conjugating enzyme]-L-cysteine + [acceptor protein]-L-lysine = [E2 ubiquitin-conjugating enzyme]-L-cysteine + N(6)-ubiquitinyl-[acceptor protein]-L-lysine.</text>
        <dbReference type="EC" id="2.3.2.27"/>
    </reaction>
</comment>
<comment type="pathway">
    <text>Protein modification; protein ubiquitination.</text>
</comment>
<comment type="tissue specificity">
    <text evidence="7">Weakly expressed in adult brain, heart and kidney.</text>
</comment>
<comment type="sequence caution" evidence="8">
    <conflict type="frameshift">
        <sequence resource="EMBL-CDS" id="BAC99018"/>
    </conflict>
</comment>
<accession>Q8JFF3</accession>
<accession>Q76L86</accession>
<accession>Q76L91</accession>
<organism>
    <name type="scientific">Seriola quinqueradiata</name>
    <name type="common">Five-ray yellowtail</name>
    <dbReference type="NCBI Taxonomy" id="8161"/>
    <lineage>
        <taxon>Eukaryota</taxon>
        <taxon>Metazoa</taxon>
        <taxon>Chordata</taxon>
        <taxon>Craniata</taxon>
        <taxon>Vertebrata</taxon>
        <taxon>Euteleostomi</taxon>
        <taxon>Actinopterygii</taxon>
        <taxon>Neopterygii</taxon>
        <taxon>Teleostei</taxon>
        <taxon>Neoteleostei</taxon>
        <taxon>Acanthomorphata</taxon>
        <taxon>Carangaria</taxon>
        <taxon>Carangiformes</taxon>
        <taxon>Carangidae</taxon>
        <taxon>Seriola</taxon>
    </lineage>
</organism>
<name>MKRN1_SERQU</name>
<protein>
    <recommendedName>
        <fullName>Probable E3 ubiquitin-protein ligase makorin-1</fullName>
        <ecNumber>2.3.2.27</ecNumber>
    </recommendedName>
    <alternativeName>
        <fullName evidence="8">RING-type E3 ubiquitin transferase makorin-1</fullName>
    </alternativeName>
</protein>
<feature type="chain" id="PRO_0000361758" description="Probable E3 ubiquitin-protein ligase makorin-1">
    <location>
        <begin position="1"/>
        <end position="435"/>
    </location>
</feature>
<feature type="zinc finger region" description="C3H1-type 1" evidence="5">
    <location>
        <begin position="18"/>
        <end position="45"/>
    </location>
</feature>
<feature type="zinc finger region" description="C3H1-type 2" evidence="5">
    <location>
        <begin position="48"/>
        <end position="75"/>
    </location>
</feature>
<feature type="zinc finger region" description="C3H1-type 3" evidence="5">
    <location>
        <begin position="155"/>
        <end position="182"/>
    </location>
</feature>
<feature type="zinc finger region" description="RING-type" evidence="4">
    <location>
        <begin position="228"/>
        <end position="282"/>
    </location>
</feature>
<feature type="zinc finger region" description="C3H1-type 4" evidence="5">
    <location>
        <begin position="311"/>
        <end position="340"/>
    </location>
</feature>
<feature type="region of interest" description="Disordered" evidence="6">
    <location>
        <begin position="81"/>
        <end position="109"/>
    </location>
</feature>
<feature type="region of interest" description="Makorin-type Cys-His" evidence="3">
    <location>
        <begin position="183"/>
        <end position="210"/>
    </location>
</feature>
<feature type="region of interest" description="Disordered" evidence="6">
    <location>
        <begin position="345"/>
        <end position="369"/>
    </location>
</feature>
<feature type="compositionally biased region" description="Pro residues" evidence="6">
    <location>
        <begin position="99"/>
        <end position="108"/>
    </location>
</feature>
<reference evidence="8 9" key="1">
    <citation type="journal article" date="2003" name="J. Egypt. Ger. Soc. Zool. C Histol. Histochem.">
        <title>The genomic organization of MKRN1, and expression profiles of MKRN1, MKRN2, and RAF1 in yellowtail fish (Seriola quinqueradiata).</title>
        <authorList>
            <person name="Chamnan C."/>
            <person name="Abe S."/>
            <person name="Doi M."/>
            <person name="Chiba S."/>
            <person name="Gray T.A."/>
        </authorList>
    </citation>
    <scope>NUCLEOTIDE SEQUENCE [GENOMIC DNA / MRNA]</scope>
    <scope>TISSUE SPECIFICITY</scope>
    <source>
        <tissue evidence="9">Testis</tissue>
    </source>
</reference>
<reference evidence="8 10" key="2">
    <citation type="submission" date="2002-04" db="EMBL/GenBank/DDBJ databases">
        <title>Genomic structure of the gene coding protein featuring ring-finger, Makorin1, found in Yellowtail Tuna.</title>
        <authorList>
            <person name="Chamnan C."/>
            <person name="Abe S."/>
        </authorList>
    </citation>
    <scope>NUCLEOTIDE SEQUENCE [GENOMIC DNA / MRNA] OF 18-435</scope>
    <source>
        <tissue evidence="10">Testis</tissue>
    </source>
</reference>